<proteinExistence type="inferred from homology"/>
<accession>Q8CN30</accession>
<organism>
    <name type="scientific">Staphylococcus epidermidis (strain ATCC 12228 / FDA PCI 1200)</name>
    <dbReference type="NCBI Taxonomy" id="176280"/>
    <lineage>
        <taxon>Bacteria</taxon>
        <taxon>Bacillati</taxon>
        <taxon>Bacillota</taxon>
        <taxon>Bacilli</taxon>
        <taxon>Bacillales</taxon>
        <taxon>Staphylococcaceae</taxon>
        <taxon>Staphylococcus</taxon>
    </lineage>
</organism>
<feature type="chain" id="PRO_0000162860" description="Thiazole synthase">
    <location>
        <begin position="1"/>
        <end position="255"/>
    </location>
</feature>
<feature type="active site" description="Schiff-base intermediate with DXP" evidence="1">
    <location>
        <position position="96"/>
    </location>
</feature>
<feature type="binding site" evidence="1">
    <location>
        <position position="157"/>
    </location>
    <ligand>
        <name>1-deoxy-D-xylulose 5-phosphate</name>
        <dbReference type="ChEBI" id="CHEBI:57792"/>
    </ligand>
</feature>
<feature type="binding site" evidence="1">
    <location>
        <begin position="183"/>
        <end position="184"/>
    </location>
    <ligand>
        <name>1-deoxy-D-xylulose 5-phosphate</name>
        <dbReference type="ChEBI" id="CHEBI:57792"/>
    </ligand>
</feature>
<feature type="binding site" evidence="1">
    <location>
        <begin position="205"/>
        <end position="206"/>
    </location>
    <ligand>
        <name>1-deoxy-D-xylulose 5-phosphate</name>
        <dbReference type="ChEBI" id="CHEBI:57792"/>
    </ligand>
</feature>
<sequence length="255" mass="27344">MFKIGNLELQSRLLLGTGKFENEEVQSKAIEASETNVLTFAVRRMNLYDRNLPNPLANVNLKDFITFPNTAGAKTAQEAIRIAEIANHAGVCDMIKVEVIGDDETLLPDPFETYEACKVLLEKGYTVCPYISNDLVLAQRLEELGVHAVMPLASPIGTGRGINNPLNLSYIIENASVPVIVDAGIGSPKDACHAMELGADGILLNTAISAAKDPVKMAEAMKLGINAGRLSYEAGRIPVKYTAQASSPSEGLGFL</sequence>
<dbReference type="EC" id="2.8.1.10" evidence="1"/>
<dbReference type="EMBL" id="AE015929">
    <property type="protein sequence ID" value="AAO05701.1"/>
    <property type="molecule type" value="Genomic_DNA"/>
</dbReference>
<dbReference type="RefSeq" id="NP_765615.1">
    <property type="nucleotide sequence ID" value="NC_004461.1"/>
</dbReference>
<dbReference type="RefSeq" id="WP_001831506.1">
    <property type="nucleotide sequence ID" value="NZ_WBME01000003.1"/>
</dbReference>
<dbReference type="SMR" id="Q8CN30"/>
<dbReference type="KEGG" id="sep:SE_2060"/>
<dbReference type="PATRIC" id="fig|176280.10.peg.2013"/>
<dbReference type="eggNOG" id="COG2022">
    <property type="taxonomic scope" value="Bacteria"/>
</dbReference>
<dbReference type="HOGENOM" id="CLU_062233_1_0_9"/>
<dbReference type="OrthoDB" id="9805935at2"/>
<dbReference type="UniPathway" id="UPA00060"/>
<dbReference type="Proteomes" id="UP000001411">
    <property type="component" value="Chromosome"/>
</dbReference>
<dbReference type="GO" id="GO:0005737">
    <property type="term" value="C:cytoplasm"/>
    <property type="evidence" value="ECO:0007669"/>
    <property type="project" value="UniProtKB-SubCell"/>
</dbReference>
<dbReference type="GO" id="GO:1990107">
    <property type="term" value="F:thiazole synthase activity"/>
    <property type="evidence" value="ECO:0007669"/>
    <property type="project" value="UniProtKB-EC"/>
</dbReference>
<dbReference type="GO" id="GO:0009229">
    <property type="term" value="P:thiamine diphosphate biosynthetic process"/>
    <property type="evidence" value="ECO:0007669"/>
    <property type="project" value="UniProtKB-UniRule"/>
</dbReference>
<dbReference type="CDD" id="cd04728">
    <property type="entry name" value="ThiG"/>
    <property type="match status" value="1"/>
</dbReference>
<dbReference type="Gene3D" id="3.20.20.70">
    <property type="entry name" value="Aldolase class I"/>
    <property type="match status" value="1"/>
</dbReference>
<dbReference type="HAMAP" id="MF_00443">
    <property type="entry name" value="ThiG"/>
    <property type="match status" value="1"/>
</dbReference>
<dbReference type="InterPro" id="IPR013785">
    <property type="entry name" value="Aldolase_TIM"/>
</dbReference>
<dbReference type="InterPro" id="IPR033983">
    <property type="entry name" value="Thiazole_synthase_ThiG"/>
</dbReference>
<dbReference type="InterPro" id="IPR008867">
    <property type="entry name" value="ThiG"/>
</dbReference>
<dbReference type="PANTHER" id="PTHR34266">
    <property type="entry name" value="THIAZOLE SYNTHASE"/>
    <property type="match status" value="1"/>
</dbReference>
<dbReference type="PANTHER" id="PTHR34266:SF2">
    <property type="entry name" value="THIAZOLE SYNTHASE"/>
    <property type="match status" value="1"/>
</dbReference>
<dbReference type="Pfam" id="PF05690">
    <property type="entry name" value="ThiG"/>
    <property type="match status" value="1"/>
</dbReference>
<dbReference type="SUPFAM" id="SSF110399">
    <property type="entry name" value="ThiG-like"/>
    <property type="match status" value="1"/>
</dbReference>
<comment type="function">
    <text evidence="1">Catalyzes the rearrangement of 1-deoxy-D-xylulose 5-phosphate (DXP) to produce the thiazole phosphate moiety of thiamine. Sulfur is provided by the thiocarboxylate moiety of the carrier protein ThiS. In vitro, sulfur can be provided by H(2)S.</text>
</comment>
<comment type="catalytic activity">
    <reaction evidence="1">
        <text>[ThiS sulfur-carrier protein]-C-terminal-Gly-aminoethanethioate + 2-iminoacetate + 1-deoxy-D-xylulose 5-phosphate = [ThiS sulfur-carrier protein]-C-terminal Gly-Gly + 2-[(2R,5Z)-2-carboxy-4-methylthiazol-5(2H)-ylidene]ethyl phosphate + 2 H2O + H(+)</text>
        <dbReference type="Rhea" id="RHEA:26297"/>
        <dbReference type="Rhea" id="RHEA-COMP:12909"/>
        <dbReference type="Rhea" id="RHEA-COMP:19908"/>
        <dbReference type="ChEBI" id="CHEBI:15377"/>
        <dbReference type="ChEBI" id="CHEBI:15378"/>
        <dbReference type="ChEBI" id="CHEBI:57792"/>
        <dbReference type="ChEBI" id="CHEBI:62899"/>
        <dbReference type="ChEBI" id="CHEBI:77846"/>
        <dbReference type="ChEBI" id="CHEBI:90778"/>
        <dbReference type="ChEBI" id="CHEBI:232372"/>
        <dbReference type="EC" id="2.8.1.10"/>
    </reaction>
</comment>
<comment type="pathway">
    <text evidence="1">Cofactor biosynthesis; thiamine diphosphate biosynthesis.</text>
</comment>
<comment type="subunit">
    <text evidence="1">Homotetramer. Forms heterodimers with either ThiH or ThiS.</text>
</comment>
<comment type="subcellular location">
    <subcellularLocation>
        <location evidence="1">Cytoplasm</location>
    </subcellularLocation>
</comment>
<comment type="similarity">
    <text evidence="1">Belongs to the ThiG family.</text>
</comment>
<name>THIG_STAES</name>
<gene>
    <name evidence="1" type="primary">thiG</name>
    <name type="ordered locus">SE_2060</name>
</gene>
<keyword id="KW-0963">Cytoplasm</keyword>
<keyword id="KW-0704">Schiff base</keyword>
<keyword id="KW-0784">Thiamine biosynthesis</keyword>
<keyword id="KW-0808">Transferase</keyword>
<protein>
    <recommendedName>
        <fullName evidence="1">Thiazole synthase</fullName>
        <ecNumber evidence="1">2.8.1.10</ecNumber>
    </recommendedName>
</protein>
<evidence type="ECO:0000255" key="1">
    <source>
        <dbReference type="HAMAP-Rule" id="MF_00443"/>
    </source>
</evidence>
<reference key="1">
    <citation type="journal article" date="2003" name="Mol. Microbiol.">
        <title>Genome-based analysis of virulence genes in a non-biofilm-forming Staphylococcus epidermidis strain (ATCC 12228).</title>
        <authorList>
            <person name="Zhang Y.-Q."/>
            <person name="Ren S.-X."/>
            <person name="Li H.-L."/>
            <person name="Wang Y.-X."/>
            <person name="Fu G."/>
            <person name="Yang J."/>
            <person name="Qin Z.-Q."/>
            <person name="Miao Y.-G."/>
            <person name="Wang W.-Y."/>
            <person name="Chen R.-S."/>
            <person name="Shen Y."/>
            <person name="Chen Z."/>
            <person name="Yuan Z.-H."/>
            <person name="Zhao G.-P."/>
            <person name="Qu D."/>
            <person name="Danchin A."/>
            <person name="Wen Y.-M."/>
        </authorList>
    </citation>
    <scope>NUCLEOTIDE SEQUENCE [LARGE SCALE GENOMIC DNA]</scope>
    <source>
        <strain>ATCC 12228 / FDA PCI 1200</strain>
    </source>
</reference>